<reference key="1">
    <citation type="submission" date="2006-03" db="EMBL/GenBank/DDBJ databases">
        <title>Complete sequence of Rhodopseudomonas palustris BisB5.</title>
        <authorList>
            <consortium name="US DOE Joint Genome Institute"/>
            <person name="Copeland A."/>
            <person name="Lucas S."/>
            <person name="Lapidus A."/>
            <person name="Barry K."/>
            <person name="Detter J.C."/>
            <person name="Glavina del Rio T."/>
            <person name="Hammon N."/>
            <person name="Israni S."/>
            <person name="Dalin E."/>
            <person name="Tice H."/>
            <person name="Pitluck S."/>
            <person name="Chain P."/>
            <person name="Malfatti S."/>
            <person name="Shin M."/>
            <person name="Vergez L."/>
            <person name="Schmutz J."/>
            <person name="Larimer F."/>
            <person name="Land M."/>
            <person name="Hauser L."/>
            <person name="Pelletier D.A."/>
            <person name="Kyrpides N."/>
            <person name="Lykidis A."/>
            <person name="Oda Y."/>
            <person name="Harwood C.S."/>
            <person name="Richardson P."/>
        </authorList>
    </citation>
    <scope>NUCLEOTIDE SEQUENCE [LARGE SCALE GENOMIC DNA]</scope>
    <source>
        <strain>BisB5</strain>
    </source>
</reference>
<feature type="chain" id="PRO_0000262259" description="Phosphatidylserine decarboxylase beta chain" evidence="1">
    <location>
        <begin position="1"/>
        <end position="189"/>
    </location>
</feature>
<feature type="chain" id="PRO_0000262260" description="Phosphatidylserine decarboxylase alpha chain" evidence="1">
    <location>
        <begin position="190"/>
        <end position="232"/>
    </location>
</feature>
<feature type="active site" description="Schiff-base intermediate with substrate; via pyruvic acid" evidence="1">
    <location>
        <position position="190"/>
    </location>
</feature>
<feature type="site" description="Cleavage (non-hydrolytic); by autocatalysis" evidence="1">
    <location>
        <begin position="189"/>
        <end position="190"/>
    </location>
</feature>
<feature type="modified residue" description="Pyruvic acid (Ser); by autocatalysis" evidence="1">
    <location>
        <position position="190"/>
    </location>
</feature>
<comment type="function">
    <text evidence="1">Catalyzes the formation of phosphatidylethanolamine (PtdEtn) from phosphatidylserine (PtdSer).</text>
</comment>
<comment type="catalytic activity">
    <reaction evidence="1">
        <text>a 1,2-diacyl-sn-glycero-3-phospho-L-serine + H(+) = a 1,2-diacyl-sn-glycero-3-phosphoethanolamine + CO2</text>
        <dbReference type="Rhea" id="RHEA:20828"/>
        <dbReference type="ChEBI" id="CHEBI:15378"/>
        <dbReference type="ChEBI" id="CHEBI:16526"/>
        <dbReference type="ChEBI" id="CHEBI:57262"/>
        <dbReference type="ChEBI" id="CHEBI:64612"/>
        <dbReference type="EC" id="4.1.1.65"/>
    </reaction>
</comment>
<comment type="cofactor">
    <cofactor evidence="1">
        <name>pyruvate</name>
        <dbReference type="ChEBI" id="CHEBI:15361"/>
    </cofactor>
    <text evidence="1">Binds 1 pyruvoyl group covalently per subunit.</text>
</comment>
<comment type="pathway">
    <text evidence="1">Phospholipid metabolism; phosphatidylethanolamine biosynthesis; phosphatidylethanolamine from CDP-diacylglycerol: step 2/2.</text>
</comment>
<comment type="subunit">
    <text evidence="1">Heterodimer of a large membrane-associated beta subunit and a small pyruvoyl-containing alpha subunit.</text>
</comment>
<comment type="subcellular location">
    <subcellularLocation>
        <location evidence="1">Cell membrane</location>
        <topology evidence="1">Peripheral membrane protein</topology>
    </subcellularLocation>
</comment>
<comment type="PTM">
    <text evidence="1">Is synthesized initially as an inactive proenzyme. Formation of the active enzyme involves a self-maturation process in which the active site pyruvoyl group is generated from an internal serine residue via an autocatalytic post-translational modification. Two non-identical subunits are generated from the proenzyme in this reaction, and the pyruvate is formed at the N-terminus of the alpha chain, which is derived from the carboxyl end of the proenzyme. The post-translation cleavage follows an unusual pathway, termed non-hydrolytic serinolysis, in which the side chain hydroxyl group of the serine supplies its oxygen atom to form the C-terminus of the beta chain, while the remainder of the serine residue undergoes an oxidative deamination to produce ammonia and the pyruvoyl prosthetic group on the alpha chain.</text>
</comment>
<comment type="similarity">
    <text evidence="1">Belongs to the phosphatidylserine decarboxylase family. PSD-A subfamily.</text>
</comment>
<organism>
    <name type="scientific">Rhodopseudomonas palustris (strain BisB5)</name>
    <dbReference type="NCBI Taxonomy" id="316057"/>
    <lineage>
        <taxon>Bacteria</taxon>
        <taxon>Pseudomonadati</taxon>
        <taxon>Pseudomonadota</taxon>
        <taxon>Alphaproteobacteria</taxon>
        <taxon>Hyphomicrobiales</taxon>
        <taxon>Nitrobacteraceae</taxon>
        <taxon>Rhodopseudomonas</taxon>
    </lineage>
</organism>
<name>PSD_RHOPS</name>
<protein>
    <recommendedName>
        <fullName evidence="1">Phosphatidylserine decarboxylase proenzyme</fullName>
        <ecNumber evidence="1">4.1.1.65</ecNumber>
    </recommendedName>
    <component>
        <recommendedName>
            <fullName evidence="1">Phosphatidylserine decarboxylase alpha chain</fullName>
        </recommendedName>
    </component>
    <component>
        <recommendedName>
            <fullName evidence="1">Phosphatidylserine decarboxylase beta chain</fullName>
        </recommendedName>
    </component>
</protein>
<dbReference type="EC" id="4.1.1.65" evidence="1"/>
<dbReference type="EMBL" id="CP000283">
    <property type="protein sequence ID" value="ABE39310.1"/>
    <property type="molecule type" value="Genomic_DNA"/>
</dbReference>
<dbReference type="SMR" id="Q139C9"/>
<dbReference type="STRING" id="316057.RPD_2075"/>
<dbReference type="KEGG" id="rpd:RPD_2075"/>
<dbReference type="eggNOG" id="COG0688">
    <property type="taxonomic scope" value="Bacteria"/>
</dbReference>
<dbReference type="HOGENOM" id="CLU_072492_0_0_5"/>
<dbReference type="BioCyc" id="RPAL316057:RPD_RS10415-MONOMER"/>
<dbReference type="UniPathway" id="UPA00558">
    <property type="reaction ID" value="UER00616"/>
</dbReference>
<dbReference type="Proteomes" id="UP000001818">
    <property type="component" value="Chromosome"/>
</dbReference>
<dbReference type="GO" id="GO:0005886">
    <property type="term" value="C:plasma membrane"/>
    <property type="evidence" value="ECO:0007669"/>
    <property type="project" value="UniProtKB-SubCell"/>
</dbReference>
<dbReference type="GO" id="GO:0004609">
    <property type="term" value="F:phosphatidylserine decarboxylase activity"/>
    <property type="evidence" value="ECO:0007669"/>
    <property type="project" value="UniProtKB-UniRule"/>
</dbReference>
<dbReference type="GO" id="GO:0006646">
    <property type="term" value="P:phosphatidylethanolamine biosynthetic process"/>
    <property type="evidence" value="ECO:0007669"/>
    <property type="project" value="UniProtKB-UniRule"/>
</dbReference>
<dbReference type="HAMAP" id="MF_00664">
    <property type="entry name" value="PS_decarb_PSD_A"/>
    <property type="match status" value="1"/>
</dbReference>
<dbReference type="InterPro" id="IPR003817">
    <property type="entry name" value="PS_Dcarbxylase"/>
</dbReference>
<dbReference type="InterPro" id="IPR033175">
    <property type="entry name" value="PSD-A"/>
</dbReference>
<dbReference type="NCBIfam" id="NF003677">
    <property type="entry name" value="PRK05305.1-1"/>
    <property type="match status" value="1"/>
</dbReference>
<dbReference type="NCBIfam" id="NF003678">
    <property type="entry name" value="PRK05305.1-2"/>
    <property type="match status" value="1"/>
</dbReference>
<dbReference type="NCBIfam" id="NF003679">
    <property type="entry name" value="PRK05305.1-3"/>
    <property type="match status" value="1"/>
</dbReference>
<dbReference type="NCBIfam" id="NF003685">
    <property type="entry name" value="PRK05305.2-5"/>
    <property type="match status" value="1"/>
</dbReference>
<dbReference type="PANTHER" id="PTHR35809">
    <property type="entry name" value="ARCHAETIDYLSERINE DECARBOXYLASE PROENZYME-RELATED"/>
    <property type="match status" value="1"/>
</dbReference>
<dbReference type="PANTHER" id="PTHR35809:SF1">
    <property type="entry name" value="ARCHAETIDYLSERINE DECARBOXYLASE PROENZYME-RELATED"/>
    <property type="match status" value="1"/>
</dbReference>
<dbReference type="Pfam" id="PF02666">
    <property type="entry name" value="PS_Dcarbxylase"/>
    <property type="match status" value="1"/>
</dbReference>
<accession>Q139C9</accession>
<sequence length="232" mass="25122">MSVVKSIRAQIPPIHREGYPFIGAFALATLVLFLIWAPLGWIGTVLTIWCALFFRDPVRVTPVREGLVVAPADGRVSMVVQMIPPPALGLGDKPLPRVSIFMSVFNCHVNRSPVAGRVERIIYSPGKFINAELDKASEDNERNSMVISTPAGQIGVVQIAGLVARRIVSFVREGQTLAPGERFGLIRFGSRLDVYLPEGAKPLVSEGQTAIAGETVLADFNLGDGGRTYRAD</sequence>
<keyword id="KW-1003">Cell membrane</keyword>
<keyword id="KW-0210">Decarboxylase</keyword>
<keyword id="KW-0444">Lipid biosynthesis</keyword>
<keyword id="KW-0443">Lipid metabolism</keyword>
<keyword id="KW-0456">Lyase</keyword>
<keyword id="KW-0472">Membrane</keyword>
<keyword id="KW-0594">Phospholipid biosynthesis</keyword>
<keyword id="KW-1208">Phospholipid metabolism</keyword>
<keyword id="KW-0670">Pyruvate</keyword>
<keyword id="KW-0865">Zymogen</keyword>
<evidence type="ECO:0000255" key="1">
    <source>
        <dbReference type="HAMAP-Rule" id="MF_00664"/>
    </source>
</evidence>
<gene>
    <name evidence="1" type="primary">psd</name>
    <name type="ordered locus">RPD_2075</name>
</gene>
<proteinExistence type="inferred from homology"/>